<name>SAHH_CHLL2</name>
<gene>
    <name evidence="1" type="primary">ahcY</name>
    <name type="ordered locus">Clim_1642</name>
</gene>
<dbReference type="EC" id="3.13.2.1" evidence="1"/>
<dbReference type="EMBL" id="CP001097">
    <property type="protein sequence ID" value="ACD90685.1"/>
    <property type="molecule type" value="Genomic_DNA"/>
</dbReference>
<dbReference type="RefSeq" id="WP_012466558.1">
    <property type="nucleotide sequence ID" value="NC_010803.1"/>
</dbReference>
<dbReference type="SMR" id="B3EDY3"/>
<dbReference type="STRING" id="290315.Clim_1642"/>
<dbReference type="KEGG" id="cli:Clim_1642"/>
<dbReference type="eggNOG" id="COG0499">
    <property type="taxonomic scope" value="Bacteria"/>
</dbReference>
<dbReference type="HOGENOM" id="CLU_025194_2_1_10"/>
<dbReference type="OrthoDB" id="9802717at2"/>
<dbReference type="UniPathway" id="UPA00314">
    <property type="reaction ID" value="UER00076"/>
</dbReference>
<dbReference type="Proteomes" id="UP000008841">
    <property type="component" value="Chromosome"/>
</dbReference>
<dbReference type="GO" id="GO:0005829">
    <property type="term" value="C:cytosol"/>
    <property type="evidence" value="ECO:0007669"/>
    <property type="project" value="TreeGrafter"/>
</dbReference>
<dbReference type="GO" id="GO:0004013">
    <property type="term" value="F:adenosylhomocysteinase activity"/>
    <property type="evidence" value="ECO:0007669"/>
    <property type="project" value="UniProtKB-UniRule"/>
</dbReference>
<dbReference type="GO" id="GO:0071269">
    <property type="term" value="P:L-homocysteine biosynthetic process"/>
    <property type="evidence" value="ECO:0007669"/>
    <property type="project" value="UniProtKB-UniRule"/>
</dbReference>
<dbReference type="GO" id="GO:0006730">
    <property type="term" value="P:one-carbon metabolic process"/>
    <property type="evidence" value="ECO:0007669"/>
    <property type="project" value="UniProtKB-KW"/>
</dbReference>
<dbReference type="GO" id="GO:0033353">
    <property type="term" value="P:S-adenosylmethionine cycle"/>
    <property type="evidence" value="ECO:0007669"/>
    <property type="project" value="TreeGrafter"/>
</dbReference>
<dbReference type="CDD" id="cd00401">
    <property type="entry name" value="SAHH"/>
    <property type="match status" value="1"/>
</dbReference>
<dbReference type="FunFam" id="3.40.50.1480:FF:000006">
    <property type="entry name" value="Adenosylhomocysteinase"/>
    <property type="match status" value="1"/>
</dbReference>
<dbReference type="FunFam" id="3.40.50.720:FF:000004">
    <property type="entry name" value="Adenosylhomocysteinase"/>
    <property type="match status" value="1"/>
</dbReference>
<dbReference type="Gene3D" id="3.40.50.1480">
    <property type="entry name" value="Adenosylhomocysteinase-like"/>
    <property type="match status" value="1"/>
</dbReference>
<dbReference type="Gene3D" id="3.40.50.720">
    <property type="entry name" value="NAD(P)-binding Rossmann-like Domain"/>
    <property type="match status" value="1"/>
</dbReference>
<dbReference type="HAMAP" id="MF_00563">
    <property type="entry name" value="AdoHcyase"/>
    <property type="match status" value="1"/>
</dbReference>
<dbReference type="InterPro" id="IPR042172">
    <property type="entry name" value="Adenosylhomocyst_ase-like_sf"/>
</dbReference>
<dbReference type="InterPro" id="IPR000043">
    <property type="entry name" value="Adenosylhomocysteinase-like"/>
</dbReference>
<dbReference type="InterPro" id="IPR015878">
    <property type="entry name" value="Ado_hCys_hydrolase_NAD-bd"/>
</dbReference>
<dbReference type="InterPro" id="IPR036291">
    <property type="entry name" value="NAD(P)-bd_dom_sf"/>
</dbReference>
<dbReference type="InterPro" id="IPR020082">
    <property type="entry name" value="S-Ado-L-homoCys_hydrolase_CS"/>
</dbReference>
<dbReference type="NCBIfam" id="TIGR00936">
    <property type="entry name" value="ahcY"/>
    <property type="match status" value="1"/>
</dbReference>
<dbReference type="NCBIfam" id="NF004005">
    <property type="entry name" value="PRK05476.2-3"/>
    <property type="match status" value="1"/>
</dbReference>
<dbReference type="PANTHER" id="PTHR23420">
    <property type="entry name" value="ADENOSYLHOMOCYSTEINASE"/>
    <property type="match status" value="1"/>
</dbReference>
<dbReference type="PANTHER" id="PTHR23420:SF0">
    <property type="entry name" value="ADENOSYLHOMOCYSTEINASE"/>
    <property type="match status" value="1"/>
</dbReference>
<dbReference type="Pfam" id="PF05221">
    <property type="entry name" value="AdoHcyase"/>
    <property type="match status" value="1"/>
</dbReference>
<dbReference type="Pfam" id="PF00670">
    <property type="entry name" value="AdoHcyase_NAD"/>
    <property type="match status" value="1"/>
</dbReference>
<dbReference type="PIRSF" id="PIRSF001109">
    <property type="entry name" value="Ad_hcy_hydrolase"/>
    <property type="match status" value="1"/>
</dbReference>
<dbReference type="SMART" id="SM00996">
    <property type="entry name" value="AdoHcyase"/>
    <property type="match status" value="1"/>
</dbReference>
<dbReference type="SMART" id="SM00997">
    <property type="entry name" value="AdoHcyase_NAD"/>
    <property type="match status" value="1"/>
</dbReference>
<dbReference type="SUPFAM" id="SSF52283">
    <property type="entry name" value="Formate/glycerate dehydrogenase catalytic domain-like"/>
    <property type="match status" value="1"/>
</dbReference>
<dbReference type="SUPFAM" id="SSF51735">
    <property type="entry name" value="NAD(P)-binding Rossmann-fold domains"/>
    <property type="match status" value="1"/>
</dbReference>
<dbReference type="PROSITE" id="PS00738">
    <property type="entry name" value="ADOHCYASE_1"/>
    <property type="match status" value="1"/>
</dbReference>
<dbReference type="PROSITE" id="PS00739">
    <property type="entry name" value="ADOHCYASE_2"/>
    <property type="match status" value="1"/>
</dbReference>
<organism>
    <name type="scientific">Chlorobium limicola (strain DSM 245 / NBRC 103803 / 6330)</name>
    <dbReference type="NCBI Taxonomy" id="290315"/>
    <lineage>
        <taxon>Bacteria</taxon>
        <taxon>Pseudomonadati</taxon>
        <taxon>Chlorobiota</taxon>
        <taxon>Chlorobiia</taxon>
        <taxon>Chlorobiales</taxon>
        <taxon>Chlorobiaceae</taxon>
        <taxon>Chlorobium/Pelodictyon group</taxon>
        <taxon>Chlorobium</taxon>
    </lineage>
</organism>
<reference key="1">
    <citation type="submission" date="2008-05" db="EMBL/GenBank/DDBJ databases">
        <title>Complete sequence of Chlorobium limicola DSM 245.</title>
        <authorList>
            <consortium name="US DOE Joint Genome Institute"/>
            <person name="Lucas S."/>
            <person name="Copeland A."/>
            <person name="Lapidus A."/>
            <person name="Glavina del Rio T."/>
            <person name="Dalin E."/>
            <person name="Tice H."/>
            <person name="Bruce D."/>
            <person name="Goodwin L."/>
            <person name="Pitluck S."/>
            <person name="Schmutz J."/>
            <person name="Larimer F."/>
            <person name="Land M."/>
            <person name="Hauser L."/>
            <person name="Kyrpides N."/>
            <person name="Ovchinnikova G."/>
            <person name="Zhao F."/>
            <person name="Li T."/>
            <person name="Liu Z."/>
            <person name="Overmann J."/>
            <person name="Bryant D.A."/>
            <person name="Richardson P."/>
        </authorList>
    </citation>
    <scope>NUCLEOTIDE SEQUENCE [LARGE SCALE GENOMIC DNA]</scope>
    <source>
        <strain>DSM 245 / NBRC 103803 / 6330</strain>
    </source>
</reference>
<protein>
    <recommendedName>
        <fullName evidence="1">Adenosylhomocysteinase</fullName>
        <ecNumber evidence="1">3.13.2.1</ecNumber>
    </recommendedName>
    <alternativeName>
        <fullName evidence="1">S-adenosyl-L-homocysteine hydrolase</fullName>
        <shortName evidence="1">AdoHcyase</shortName>
    </alternativeName>
</protein>
<feature type="chain" id="PRO_1000129275" description="Adenosylhomocysteinase">
    <location>
        <begin position="1"/>
        <end position="471"/>
    </location>
</feature>
<feature type="binding site" evidence="1">
    <location>
        <position position="60"/>
    </location>
    <ligand>
        <name>substrate</name>
    </ligand>
</feature>
<feature type="binding site" evidence="1">
    <location>
        <position position="135"/>
    </location>
    <ligand>
        <name>substrate</name>
    </ligand>
</feature>
<feature type="binding site" evidence="1">
    <location>
        <position position="196"/>
    </location>
    <ligand>
        <name>substrate</name>
    </ligand>
</feature>
<feature type="binding site" evidence="1">
    <location>
        <begin position="197"/>
        <end position="199"/>
    </location>
    <ligand>
        <name>NAD(+)</name>
        <dbReference type="ChEBI" id="CHEBI:57540"/>
    </ligand>
</feature>
<feature type="binding site" evidence="1">
    <location>
        <position position="226"/>
    </location>
    <ligand>
        <name>substrate</name>
    </ligand>
</feature>
<feature type="binding site" evidence="1">
    <location>
        <position position="230"/>
    </location>
    <ligand>
        <name>substrate</name>
    </ligand>
</feature>
<feature type="binding site" evidence="1">
    <location>
        <position position="231"/>
    </location>
    <ligand>
        <name>NAD(+)</name>
        <dbReference type="ChEBI" id="CHEBI:57540"/>
    </ligand>
</feature>
<feature type="binding site" evidence="1">
    <location>
        <begin position="260"/>
        <end position="265"/>
    </location>
    <ligand>
        <name>NAD(+)</name>
        <dbReference type="ChEBI" id="CHEBI:57540"/>
    </ligand>
</feature>
<feature type="binding site" evidence="1">
    <location>
        <position position="283"/>
    </location>
    <ligand>
        <name>NAD(+)</name>
        <dbReference type="ChEBI" id="CHEBI:57540"/>
    </ligand>
</feature>
<feature type="binding site" evidence="1">
    <location>
        <position position="318"/>
    </location>
    <ligand>
        <name>NAD(+)</name>
        <dbReference type="ChEBI" id="CHEBI:57540"/>
    </ligand>
</feature>
<feature type="binding site" evidence="1">
    <location>
        <begin position="339"/>
        <end position="341"/>
    </location>
    <ligand>
        <name>NAD(+)</name>
        <dbReference type="ChEBI" id="CHEBI:57540"/>
    </ligand>
</feature>
<feature type="binding site" evidence="1">
    <location>
        <position position="387"/>
    </location>
    <ligand>
        <name>NAD(+)</name>
        <dbReference type="ChEBI" id="CHEBI:57540"/>
    </ligand>
</feature>
<evidence type="ECO:0000255" key="1">
    <source>
        <dbReference type="HAMAP-Rule" id="MF_00563"/>
    </source>
</evidence>
<comment type="function">
    <text evidence="1">May play a key role in the regulation of the intracellular concentration of adenosylhomocysteine.</text>
</comment>
<comment type="catalytic activity">
    <reaction evidence="1">
        <text>S-adenosyl-L-homocysteine + H2O = L-homocysteine + adenosine</text>
        <dbReference type="Rhea" id="RHEA:21708"/>
        <dbReference type="ChEBI" id="CHEBI:15377"/>
        <dbReference type="ChEBI" id="CHEBI:16335"/>
        <dbReference type="ChEBI" id="CHEBI:57856"/>
        <dbReference type="ChEBI" id="CHEBI:58199"/>
        <dbReference type="EC" id="3.13.2.1"/>
    </reaction>
</comment>
<comment type="cofactor">
    <cofactor evidence="1">
        <name>NAD(+)</name>
        <dbReference type="ChEBI" id="CHEBI:57540"/>
    </cofactor>
    <text evidence="1">Binds 1 NAD(+) per subunit.</text>
</comment>
<comment type="pathway">
    <text evidence="1">Amino-acid biosynthesis; L-homocysteine biosynthesis; L-homocysteine from S-adenosyl-L-homocysteine: step 1/1.</text>
</comment>
<comment type="subcellular location">
    <subcellularLocation>
        <location evidence="1">Cytoplasm</location>
    </subcellularLocation>
</comment>
<comment type="similarity">
    <text evidence="1">Belongs to the adenosylhomocysteinase family.</text>
</comment>
<proteinExistence type="inferred from homology"/>
<keyword id="KW-0963">Cytoplasm</keyword>
<keyword id="KW-0378">Hydrolase</keyword>
<keyword id="KW-0520">NAD</keyword>
<keyword id="KW-0554">One-carbon metabolism</keyword>
<sequence>MTTEATALAYKVADITLAEWGRKEIEIAEKEMPGLMATRRKYAGQKPLKGARITGSLHMTIQTAVLIETLVDLGAEVRWASCNIFSTQDHAAAAIAAAGIPVFAWKGESLDEYWWCTRQILEFEDGKGPNLIVDDGGDATLMIHLGYKIENNPELLEKVPGNAEEKALYQQLREVYSEDTQRWHKVAAEMKGVSEETTTGVHRLYQMMEKGELLFPAINVNDSVTKSKFDNLYGCRESLADGIKRATDVMIAGKVVVVLGYGDVGKGCAHSMRTYGARVIVTEIDPICALQASMEGFEVTTMEDAVGEGNIFVTTTGNKDVITLEHMKQMRDEAIVCNIGHFDNEIQVEQLNSFAGATKLNIKPQVDKYTFESGNSIYLLAEGRLVNLGCATGHPSFVMSNSFTNQTLAQIELWTKEYSIDVYRLPKELDEEVARLHLGQLGVKLTTLSKEQADYLGIPVEGPYKPDHYRY</sequence>
<accession>B3EDY3</accession>